<gene>
    <name type="ordered locus">MJ0642</name>
</gene>
<accession>Q58059</accession>
<dbReference type="EMBL" id="L77117">
    <property type="protein sequence ID" value="AAB98644.1"/>
    <property type="molecule type" value="Genomic_DNA"/>
</dbReference>
<dbReference type="PIR" id="B64380">
    <property type="entry name" value="B64380"/>
</dbReference>
<dbReference type="SMR" id="Q58059"/>
<dbReference type="FunCoup" id="Q58059">
    <property type="interactions" value="3"/>
</dbReference>
<dbReference type="STRING" id="243232.MJ_0642"/>
<dbReference type="PaxDb" id="243232-MJ_0642"/>
<dbReference type="EnsemblBacteria" id="AAB98644">
    <property type="protein sequence ID" value="AAB98644"/>
    <property type="gene ID" value="MJ_0642"/>
</dbReference>
<dbReference type="KEGG" id="mja:MJ_0642"/>
<dbReference type="eggNOG" id="arCOG03417">
    <property type="taxonomic scope" value="Archaea"/>
</dbReference>
<dbReference type="HOGENOM" id="CLU_025776_0_0_2"/>
<dbReference type="InParanoid" id="Q58059"/>
<dbReference type="OrthoDB" id="24039at2157"/>
<dbReference type="PhylomeDB" id="Q58059"/>
<dbReference type="Proteomes" id="UP000000805">
    <property type="component" value="Chromosome"/>
</dbReference>
<dbReference type="Gene3D" id="3.40.50.1980">
    <property type="entry name" value="Nitrogenase molybdenum iron protein domain"/>
    <property type="match status" value="2"/>
</dbReference>
<dbReference type="InterPro" id="IPR050902">
    <property type="entry name" value="ABC_Transporter_SBP"/>
</dbReference>
<dbReference type="InterPro" id="IPR002491">
    <property type="entry name" value="ABC_transptr_periplasmic_BD"/>
</dbReference>
<dbReference type="PANTHER" id="PTHR30535:SF34">
    <property type="entry name" value="MOLYBDATE-BINDING PROTEIN MOLA"/>
    <property type="match status" value="1"/>
</dbReference>
<dbReference type="PANTHER" id="PTHR30535">
    <property type="entry name" value="VITAMIN B12-BINDING PROTEIN"/>
    <property type="match status" value="1"/>
</dbReference>
<dbReference type="Pfam" id="PF01497">
    <property type="entry name" value="Peripla_BP_2"/>
    <property type="match status" value="1"/>
</dbReference>
<dbReference type="SUPFAM" id="SSF53807">
    <property type="entry name" value="Helical backbone' metal receptor"/>
    <property type="match status" value="1"/>
</dbReference>
<dbReference type="PROSITE" id="PS50983">
    <property type="entry name" value="FE_B12_PBP"/>
    <property type="match status" value="1"/>
</dbReference>
<evidence type="ECO:0000255" key="1">
    <source>
        <dbReference type="PROSITE-ProRule" id="PRU00344"/>
    </source>
</evidence>
<reference key="1">
    <citation type="journal article" date="1996" name="Science">
        <title>Complete genome sequence of the methanogenic archaeon, Methanococcus jannaschii.</title>
        <authorList>
            <person name="Bult C.J."/>
            <person name="White O."/>
            <person name="Olsen G.J."/>
            <person name="Zhou L."/>
            <person name="Fleischmann R.D."/>
            <person name="Sutton G.G."/>
            <person name="Blake J.A."/>
            <person name="FitzGerald L.M."/>
            <person name="Clayton R.A."/>
            <person name="Gocayne J.D."/>
            <person name="Kerlavage A.R."/>
            <person name="Dougherty B.A."/>
            <person name="Tomb J.-F."/>
            <person name="Adams M.D."/>
            <person name="Reich C.I."/>
            <person name="Overbeek R."/>
            <person name="Kirkness E.F."/>
            <person name="Weinstock K.G."/>
            <person name="Merrick J.M."/>
            <person name="Glodek A."/>
            <person name="Scott J.L."/>
            <person name="Geoghagen N.S.M."/>
            <person name="Weidman J.F."/>
            <person name="Fuhrmann J.L."/>
            <person name="Nguyen D."/>
            <person name="Utterback T.R."/>
            <person name="Kelley J.M."/>
            <person name="Peterson J.D."/>
            <person name="Sadow P.W."/>
            <person name="Hanna M.C."/>
            <person name="Cotton M.D."/>
            <person name="Roberts K.M."/>
            <person name="Hurst M.A."/>
            <person name="Kaine B.P."/>
            <person name="Borodovsky M."/>
            <person name="Klenk H.-P."/>
            <person name="Fraser C.M."/>
            <person name="Smith H.O."/>
            <person name="Woese C.R."/>
            <person name="Venter J.C."/>
        </authorList>
    </citation>
    <scope>NUCLEOTIDE SEQUENCE [LARGE SCALE GENOMIC DNA]</scope>
    <source>
        <strain>ATCC 43067 / DSM 2661 / JAL-1 / JCM 10045 / NBRC 100440</strain>
    </source>
</reference>
<organism>
    <name type="scientific">Methanocaldococcus jannaschii (strain ATCC 43067 / DSM 2661 / JAL-1 / JCM 10045 / NBRC 100440)</name>
    <name type="common">Methanococcus jannaschii</name>
    <dbReference type="NCBI Taxonomy" id="243232"/>
    <lineage>
        <taxon>Archaea</taxon>
        <taxon>Methanobacteriati</taxon>
        <taxon>Methanobacteriota</taxon>
        <taxon>Methanomada group</taxon>
        <taxon>Methanococci</taxon>
        <taxon>Methanococcales</taxon>
        <taxon>Methanocaldococcaceae</taxon>
        <taxon>Methanocaldococcus</taxon>
    </lineage>
</organism>
<sequence>MITMALNFYKYYSRQIKYALHFNILNNSIIDAENKYINFQKPLKNVIVSDSMFIDTAYLLKIKKMIKSIKGVFWADFVLKKYYPLYSDYLKGKISNVGTDGKINYGEILNINPDMIFLIDWNIFNPLSKWLDKNNIPYTKTGNYKEPKFLGKMEWIKFYASFYNKYKKAEKVFNKIIEEKRRILKSLNSRSIKYKPVVAFFGYHKNQPYIYGKSHYIPNWIREIKGNYLFENVEGTNYHYIDRKIFNSRAKYADVCILDTMGEDIDIKELLKNNPHFLKFRAYKNKRFYITTKDYLKFETLKCSEVMEEYVKIIHPKIYQNGDNDLKYFIKVV</sequence>
<protein>
    <recommendedName>
        <fullName>Uncharacterized protein MJ0642</fullName>
    </recommendedName>
</protein>
<proteinExistence type="predicted"/>
<keyword id="KW-1185">Reference proteome</keyword>
<feature type="chain" id="PRO_0000106968" description="Uncharacterized protein MJ0642">
    <location>
        <begin position="1"/>
        <end position="333"/>
    </location>
</feature>
<feature type="domain" description="Fe/B12 periplasmic-binding" evidence="1">
    <location>
        <begin position="45"/>
        <end position="318"/>
    </location>
</feature>
<name>Y642_METJA</name>